<feature type="chain" id="PRO_0000282910" description="Thiamine transport system permease protein ThiP">
    <location>
        <begin position="1"/>
        <end position="543"/>
    </location>
</feature>
<feature type="transmembrane region" description="Helical" evidence="4">
    <location>
        <begin position="19"/>
        <end position="39"/>
    </location>
</feature>
<feature type="transmembrane region" description="Helical" evidence="4">
    <location>
        <begin position="64"/>
        <end position="84"/>
    </location>
</feature>
<feature type="transmembrane region" description="Helical" evidence="4">
    <location>
        <begin position="102"/>
        <end position="122"/>
    </location>
</feature>
<feature type="transmembrane region" description="Helical" evidence="4">
    <location>
        <begin position="142"/>
        <end position="162"/>
    </location>
</feature>
<feature type="transmembrane region" description="Helical" evidence="4">
    <location>
        <begin position="205"/>
        <end position="225"/>
    </location>
</feature>
<feature type="transmembrane region" description="Helical" evidence="4">
    <location>
        <begin position="250"/>
        <end position="270"/>
    </location>
</feature>
<feature type="transmembrane region" description="Helical" evidence="4">
    <location>
        <begin position="300"/>
        <end position="320"/>
    </location>
</feature>
<feature type="transmembrane region" description="Helical" evidence="4">
    <location>
        <begin position="343"/>
        <end position="363"/>
    </location>
</feature>
<feature type="transmembrane region" description="Helical" evidence="4">
    <location>
        <begin position="379"/>
        <end position="399"/>
    </location>
</feature>
<feature type="transmembrane region" description="Helical" evidence="4">
    <location>
        <begin position="406"/>
        <end position="426"/>
    </location>
</feature>
<feature type="transmembrane region" description="Helical" evidence="4">
    <location>
        <begin position="468"/>
        <end position="488"/>
    </location>
</feature>
<feature type="transmembrane region" description="Helical" evidence="4">
    <location>
        <begin position="510"/>
        <end position="530"/>
    </location>
</feature>
<feature type="domain" description="ABC transmembrane type-1 1" evidence="4">
    <location>
        <begin position="62"/>
        <end position="266"/>
    </location>
</feature>
<feature type="domain" description="ABC transmembrane type-1 2" evidence="4">
    <location>
        <begin position="339"/>
        <end position="530"/>
    </location>
</feature>
<reference key="1">
    <citation type="journal article" date="2002" name="Proc. Natl. Acad. Sci. U.S.A.">
        <title>The Brucella suis genome reveals fundamental similarities between animal and plant pathogens and symbionts.</title>
        <authorList>
            <person name="Paulsen I.T."/>
            <person name="Seshadri R."/>
            <person name="Nelson K.E."/>
            <person name="Eisen J.A."/>
            <person name="Heidelberg J.F."/>
            <person name="Read T.D."/>
            <person name="Dodson R.J."/>
            <person name="Umayam L.A."/>
            <person name="Brinkac L.M."/>
            <person name="Beanan M.J."/>
            <person name="Daugherty S.C."/>
            <person name="DeBoy R.T."/>
            <person name="Durkin A.S."/>
            <person name="Kolonay J.F."/>
            <person name="Madupu R."/>
            <person name="Nelson W.C."/>
            <person name="Ayodeji B."/>
            <person name="Kraul M."/>
            <person name="Shetty J."/>
            <person name="Malek J.A."/>
            <person name="Van Aken S.E."/>
            <person name="Riedmuller S."/>
            <person name="Tettelin H."/>
            <person name="Gill S.R."/>
            <person name="White O."/>
            <person name="Salzberg S.L."/>
            <person name="Hoover D.L."/>
            <person name="Lindler L.E."/>
            <person name="Halling S.M."/>
            <person name="Boyle S.M."/>
            <person name="Fraser C.M."/>
        </authorList>
    </citation>
    <scope>NUCLEOTIDE SEQUENCE [LARGE SCALE GENOMIC DNA]</scope>
    <source>
        <strain>1330</strain>
    </source>
</reference>
<reference key="2">
    <citation type="journal article" date="2011" name="J. Bacteriol.">
        <title>Revised genome sequence of Brucella suis 1330.</title>
        <authorList>
            <person name="Tae H."/>
            <person name="Shallom S."/>
            <person name="Settlage R."/>
            <person name="Preston D."/>
            <person name="Adams L.G."/>
            <person name="Garner H.R."/>
        </authorList>
    </citation>
    <scope>NUCLEOTIDE SEQUENCE [LARGE SCALE GENOMIC DNA]</scope>
    <source>
        <strain>1330</strain>
    </source>
</reference>
<name>THIP_BRUSU</name>
<proteinExistence type="inferred from homology"/>
<dbReference type="EMBL" id="AE014291">
    <property type="protein sequence ID" value="AAN30657.1"/>
    <property type="molecule type" value="Genomic_DNA"/>
</dbReference>
<dbReference type="EMBL" id="CP002997">
    <property type="protein sequence ID" value="AEM19074.1"/>
    <property type="molecule type" value="Genomic_DNA"/>
</dbReference>
<dbReference type="RefSeq" id="WP_006192520.1">
    <property type="nucleotide sequence ID" value="NZ_KN046804.1"/>
</dbReference>
<dbReference type="SMR" id="Q8FYV0"/>
<dbReference type="GeneID" id="45052725"/>
<dbReference type="KEGG" id="bms:BR1758"/>
<dbReference type="KEGG" id="bsi:BS1330_I1752"/>
<dbReference type="PATRIC" id="fig|204722.22.peg.97"/>
<dbReference type="HOGENOM" id="CLU_021838_5_3_5"/>
<dbReference type="PhylomeDB" id="Q8FYV0"/>
<dbReference type="Proteomes" id="UP000007104">
    <property type="component" value="Chromosome I"/>
</dbReference>
<dbReference type="GO" id="GO:0005886">
    <property type="term" value="C:plasma membrane"/>
    <property type="evidence" value="ECO:0007669"/>
    <property type="project" value="UniProtKB-SubCell"/>
</dbReference>
<dbReference type="GO" id="GO:0022857">
    <property type="term" value="F:transmembrane transporter activity"/>
    <property type="evidence" value="ECO:0007669"/>
    <property type="project" value="InterPro"/>
</dbReference>
<dbReference type="GO" id="GO:0015888">
    <property type="term" value="P:thiamine transport"/>
    <property type="evidence" value="ECO:0007669"/>
    <property type="project" value="InterPro"/>
</dbReference>
<dbReference type="CDD" id="cd06261">
    <property type="entry name" value="TM_PBP2"/>
    <property type="match status" value="2"/>
</dbReference>
<dbReference type="Gene3D" id="1.10.3720.10">
    <property type="entry name" value="MetI-like"/>
    <property type="match status" value="2"/>
</dbReference>
<dbReference type="InterPro" id="IPR000515">
    <property type="entry name" value="MetI-like"/>
</dbReference>
<dbReference type="InterPro" id="IPR035906">
    <property type="entry name" value="MetI-like_sf"/>
</dbReference>
<dbReference type="InterPro" id="IPR005947">
    <property type="entry name" value="ThiP_ABC_transpt"/>
</dbReference>
<dbReference type="NCBIfam" id="NF006956">
    <property type="entry name" value="PRK09433.2-5"/>
    <property type="match status" value="1"/>
</dbReference>
<dbReference type="NCBIfam" id="TIGR01253">
    <property type="entry name" value="thiP"/>
    <property type="match status" value="1"/>
</dbReference>
<dbReference type="PANTHER" id="PTHR30183">
    <property type="entry name" value="MOLYBDENUM TRANSPORT SYSTEM PERMEASE PROTEIN MODB"/>
    <property type="match status" value="1"/>
</dbReference>
<dbReference type="PANTHER" id="PTHR30183:SF9">
    <property type="entry name" value="THIAMINE TRANSPORT SYSTEM PERMEASE PROTEIN THIP"/>
    <property type="match status" value="1"/>
</dbReference>
<dbReference type="Pfam" id="PF00528">
    <property type="entry name" value="BPD_transp_1"/>
    <property type="match status" value="1"/>
</dbReference>
<dbReference type="SUPFAM" id="SSF161098">
    <property type="entry name" value="MetI-like"/>
    <property type="match status" value="2"/>
</dbReference>
<dbReference type="PROSITE" id="PS50928">
    <property type="entry name" value="ABC_TM1"/>
    <property type="match status" value="2"/>
</dbReference>
<organism>
    <name type="scientific">Brucella suis biovar 1 (strain 1330)</name>
    <dbReference type="NCBI Taxonomy" id="204722"/>
    <lineage>
        <taxon>Bacteria</taxon>
        <taxon>Pseudomonadati</taxon>
        <taxon>Pseudomonadota</taxon>
        <taxon>Alphaproteobacteria</taxon>
        <taxon>Hyphomicrobiales</taxon>
        <taxon>Brucellaceae</taxon>
        <taxon>Brucella/Ochrobactrum group</taxon>
        <taxon>Brucella</taxon>
    </lineage>
</organism>
<accession>Q8FYV0</accession>
<accession>G0K798</accession>
<evidence type="ECO:0000250" key="1">
    <source>
        <dbReference type="UniProtKB" id="P31549"/>
    </source>
</evidence>
<evidence type="ECO:0000250" key="2">
    <source>
        <dbReference type="UniProtKB" id="Q8ZRV1"/>
    </source>
</evidence>
<evidence type="ECO:0000255" key="3"/>
<evidence type="ECO:0000255" key="4">
    <source>
        <dbReference type="PROSITE-ProRule" id="PRU00441"/>
    </source>
</evidence>
<evidence type="ECO:0000305" key="5"/>
<keyword id="KW-0997">Cell inner membrane</keyword>
<keyword id="KW-1003">Cell membrane</keyword>
<keyword id="KW-0472">Membrane</keyword>
<keyword id="KW-0677">Repeat</keyword>
<keyword id="KW-0812">Transmembrane</keyword>
<keyword id="KW-1133">Transmembrane helix</keyword>
<keyword id="KW-0813">Transport</keyword>
<comment type="function">
    <text evidence="2">Part of the ABC transporter complex ThiBPQ involved in thiamine import. Probably responsible for the translocation of the substrate across the membrane.</text>
</comment>
<comment type="subunit">
    <text evidence="2">The complex is composed of two ATP-binding proteins (ThiQ), two transmembrane proteins (ThiP) and a solute-binding protein (ThiB).</text>
</comment>
<comment type="subcellular location">
    <subcellularLocation>
        <location evidence="1">Cell inner membrane</location>
        <topology evidence="3">Multi-pass membrane protein</topology>
    </subcellularLocation>
</comment>
<comment type="similarity">
    <text evidence="5">Belongs to the binding-protein-dependent transport system permease family. CysTW subfamily.</text>
</comment>
<gene>
    <name type="primary">thiP</name>
    <name type="ordered locus">BR1758</name>
    <name type="ordered locus">BS1330_I1752</name>
</gene>
<protein>
    <recommendedName>
        <fullName>Thiamine transport system permease protein ThiP</fullName>
    </recommendedName>
</protein>
<sequence length="543" mass="58402">MTATPARRTSLASPATKPVAGGLALAFLATLAGGALLALALEAGGGGFDAAANFDTYLWRVARFTIWQAVASSLRSVLFAIPIARALYAEARFPGRGLILRLFALPLALPALVAVLGVTSIYGRNGLIAHISDMLGHPMQPDIYGIAGILIAHIFFNMPLAVRLLLAAYESIPDDYWKLAAQLGMGSRARFRLIEWPVIRRSLPGMIGLVFMLCVTSFTTVLTLGGGPRATTLEVAIYQSLHFDFDPARAVALTFTQLALTLLILLILRLTGRPSEEGFTQTATPRRYGSPRKTERLFNIIVITLGFLYVALPIAGVVVSGLTADLVRLLSERIVWHAIATSLALGFSAALLAVFLSLALVAAREATRNARIANIFDTGASLILVMPPIVIGAGWFILLRHFTDPFVMAPLMVVTVNAAMAMPFAVRLLRPAWDTAASRHNKLCSQLGIKGFNRLRLIDWPSIRRPCGMAFAFAMALSLGDLGTIALFGSDALVTLPYLLLQRMGSYRTFDAAGLALILGVLCLALMMIADRAAASRKEAFLQ</sequence>